<sequence length="152" mass="17068">MQLTELIETTVTGLGYELVELERTGRGMLCIYIDQPAGISLEDCEKVTRQLQHVLTVENIDYERLEVSSPGLDRPLKKLADFERFAGSEVSVTLKKPLDGRKTYRGILHAPNGETIGLEFEGKKGEAAMLDFTLADIDKARLIPQVDFRSRK</sequence>
<evidence type="ECO:0000255" key="1">
    <source>
        <dbReference type="HAMAP-Rule" id="MF_01077"/>
    </source>
</evidence>
<comment type="function">
    <text evidence="1">Required for maturation of 30S ribosomal subunits.</text>
</comment>
<comment type="subcellular location">
    <subcellularLocation>
        <location evidence="1">Cytoplasm</location>
    </subcellularLocation>
</comment>
<comment type="similarity">
    <text evidence="1">Belongs to the RimP family.</text>
</comment>
<protein>
    <recommendedName>
        <fullName evidence="1">Ribosome maturation factor RimP</fullName>
    </recommendedName>
</protein>
<proteinExistence type="inferred from homology"/>
<reference key="1">
    <citation type="submission" date="2006-05" db="EMBL/GenBank/DDBJ databases">
        <title>Complete sequence of chromosome 1 of Burkholderia cenocepacia AU 1054.</title>
        <authorList>
            <consortium name="US DOE Joint Genome Institute"/>
            <person name="Copeland A."/>
            <person name="Lucas S."/>
            <person name="Lapidus A."/>
            <person name="Barry K."/>
            <person name="Detter J.C."/>
            <person name="Glavina del Rio T."/>
            <person name="Hammon N."/>
            <person name="Israni S."/>
            <person name="Dalin E."/>
            <person name="Tice H."/>
            <person name="Pitluck S."/>
            <person name="Chain P."/>
            <person name="Malfatti S."/>
            <person name="Shin M."/>
            <person name="Vergez L."/>
            <person name="Schmutz J."/>
            <person name="Larimer F."/>
            <person name="Land M."/>
            <person name="Hauser L."/>
            <person name="Kyrpides N."/>
            <person name="Lykidis A."/>
            <person name="LiPuma J.J."/>
            <person name="Konstantinidis K."/>
            <person name="Tiedje J.M."/>
            <person name="Richardson P."/>
        </authorList>
    </citation>
    <scope>NUCLEOTIDE SEQUENCE [LARGE SCALE GENOMIC DNA]</scope>
    <source>
        <strain>AU 1054</strain>
    </source>
</reference>
<accession>Q1BWS9</accession>
<organism>
    <name type="scientific">Burkholderia orbicola (strain AU 1054)</name>
    <dbReference type="NCBI Taxonomy" id="331271"/>
    <lineage>
        <taxon>Bacteria</taxon>
        <taxon>Pseudomonadati</taxon>
        <taxon>Pseudomonadota</taxon>
        <taxon>Betaproteobacteria</taxon>
        <taxon>Burkholderiales</taxon>
        <taxon>Burkholderiaceae</taxon>
        <taxon>Burkholderia</taxon>
        <taxon>Burkholderia cepacia complex</taxon>
        <taxon>Burkholderia orbicola</taxon>
    </lineage>
</organism>
<feature type="chain" id="PRO_1000064688" description="Ribosome maturation factor RimP">
    <location>
        <begin position="1"/>
        <end position="152"/>
    </location>
</feature>
<dbReference type="EMBL" id="CP000378">
    <property type="protein sequence ID" value="ABF75926.1"/>
    <property type="molecule type" value="Genomic_DNA"/>
</dbReference>
<dbReference type="SMR" id="Q1BWS9"/>
<dbReference type="HOGENOM" id="CLU_070525_1_0_4"/>
<dbReference type="GO" id="GO:0005829">
    <property type="term" value="C:cytosol"/>
    <property type="evidence" value="ECO:0007669"/>
    <property type="project" value="TreeGrafter"/>
</dbReference>
<dbReference type="GO" id="GO:0000028">
    <property type="term" value="P:ribosomal small subunit assembly"/>
    <property type="evidence" value="ECO:0007669"/>
    <property type="project" value="TreeGrafter"/>
</dbReference>
<dbReference type="GO" id="GO:0006412">
    <property type="term" value="P:translation"/>
    <property type="evidence" value="ECO:0007669"/>
    <property type="project" value="TreeGrafter"/>
</dbReference>
<dbReference type="CDD" id="cd01734">
    <property type="entry name" value="YlxS_C"/>
    <property type="match status" value="1"/>
</dbReference>
<dbReference type="Gene3D" id="2.30.30.180">
    <property type="entry name" value="Ribosome maturation factor RimP, C-terminal domain"/>
    <property type="match status" value="1"/>
</dbReference>
<dbReference type="Gene3D" id="3.30.300.70">
    <property type="entry name" value="RimP-like superfamily, N-terminal"/>
    <property type="match status" value="1"/>
</dbReference>
<dbReference type="HAMAP" id="MF_01077">
    <property type="entry name" value="RimP"/>
    <property type="match status" value="1"/>
</dbReference>
<dbReference type="InterPro" id="IPR003728">
    <property type="entry name" value="Ribosome_maturation_RimP"/>
</dbReference>
<dbReference type="InterPro" id="IPR028998">
    <property type="entry name" value="RimP_C"/>
</dbReference>
<dbReference type="InterPro" id="IPR036847">
    <property type="entry name" value="RimP_C_sf"/>
</dbReference>
<dbReference type="InterPro" id="IPR028989">
    <property type="entry name" value="RimP_N"/>
</dbReference>
<dbReference type="InterPro" id="IPR035956">
    <property type="entry name" value="RimP_N_sf"/>
</dbReference>
<dbReference type="NCBIfam" id="NF000929">
    <property type="entry name" value="PRK00092.2-1"/>
    <property type="match status" value="1"/>
</dbReference>
<dbReference type="PANTHER" id="PTHR33867">
    <property type="entry name" value="RIBOSOME MATURATION FACTOR RIMP"/>
    <property type="match status" value="1"/>
</dbReference>
<dbReference type="PANTHER" id="PTHR33867:SF1">
    <property type="entry name" value="RIBOSOME MATURATION FACTOR RIMP"/>
    <property type="match status" value="1"/>
</dbReference>
<dbReference type="Pfam" id="PF17384">
    <property type="entry name" value="DUF150_C"/>
    <property type="match status" value="1"/>
</dbReference>
<dbReference type="Pfam" id="PF02576">
    <property type="entry name" value="RimP_N"/>
    <property type="match status" value="1"/>
</dbReference>
<dbReference type="SUPFAM" id="SSF74942">
    <property type="entry name" value="YhbC-like, C-terminal domain"/>
    <property type="match status" value="1"/>
</dbReference>
<dbReference type="SUPFAM" id="SSF75420">
    <property type="entry name" value="YhbC-like, N-terminal domain"/>
    <property type="match status" value="1"/>
</dbReference>
<keyword id="KW-0963">Cytoplasm</keyword>
<keyword id="KW-0690">Ribosome biogenesis</keyword>
<gene>
    <name evidence="1" type="primary">rimP</name>
    <name type="ordered locus">Bcen_1018</name>
</gene>
<name>RIMP_BURO1</name>